<accession>B4E9F9</accession>
<gene>
    <name type="ordered locus">BceJ2315_26980</name>
    <name type="ORF">BCAL2760</name>
</gene>
<organism>
    <name type="scientific">Burkholderia cenocepacia (strain ATCC BAA-245 / DSM 16553 / LMG 16656 / NCTC 13227 / J2315 / CF5610)</name>
    <name type="common">Burkholderia cepacia (strain J2315)</name>
    <dbReference type="NCBI Taxonomy" id="216591"/>
    <lineage>
        <taxon>Bacteria</taxon>
        <taxon>Pseudomonadati</taxon>
        <taxon>Pseudomonadota</taxon>
        <taxon>Betaproteobacteria</taxon>
        <taxon>Burkholderiales</taxon>
        <taxon>Burkholderiaceae</taxon>
        <taxon>Burkholderia</taxon>
        <taxon>Burkholderia cepacia complex</taxon>
    </lineage>
</organism>
<protein>
    <recommendedName>
        <fullName evidence="1">UPF0434 protein BceJ2315_26980</fullName>
    </recommendedName>
</protein>
<evidence type="ECO:0000255" key="1">
    <source>
        <dbReference type="HAMAP-Rule" id="MF_01187"/>
    </source>
</evidence>
<name>Y2698_BURCJ</name>
<feature type="chain" id="PRO_1000138293" description="UPF0434 protein BceJ2315_26980">
    <location>
        <begin position="1"/>
        <end position="64"/>
    </location>
</feature>
<dbReference type="EMBL" id="AM747720">
    <property type="protein sequence ID" value="CAR53060.1"/>
    <property type="molecule type" value="Genomic_DNA"/>
</dbReference>
<dbReference type="RefSeq" id="WP_006482216.1">
    <property type="nucleotide sequence ID" value="NC_011000.1"/>
</dbReference>
<dbReference type="SMR" id="B4E9F9"/>
<dbReference type="KEGG" id="bcj:BCAL2760"/>
<dbReference type="eggNOG" id="COG2835">
    <property type="taxonomic scope" value="Bacteria"/>
</dbReference>
<dbReference type="HOGENOM" id="CLU_155659_3_0_4"/>
<dbReference type="BioCyc" id="BCEN216591:G1G1V-3058-MONOMER"/>
<dbReference type="Proteomes" id="UP000001035">
    <property type="component" value="Chromosome 1"/>
</dbReference>
<dbReference type="GO" id="GO:0005829">
    <property type="term" value="C:cytosol"/>
    <property type="evidence" value="ECO:0007669"/>
    <property type="project" value="TreeGrafter"/>
</dbReference>
<dbReference type="FunFam" id="2.20.25.10:FF:000002">
    <property type="entry name" value="UPF0434 protein YcaR"/>
    <property type="match status" value="1"/>
</dbReference>
<dbReference type="Gene3D" id="2.20.25.10">
    <property type="match status" value="1"/>
</dbReference>
<dbReference type="HAMAP" id="MF_01187">
    <property type="entry name" value="UPF0434"/>
    <property type="match status" value="1"/>
</dbReference>
<dbReference type="InterPro" id="IPR005651">
    <property type="entry name" value="Trm112-like"/>
</dbReference>
<dbReference type="PANTHER" id="PTHR33505:SF4">
    <property type="entry name" value="PROTEIN PREY, MITOCHONDRIAL"/>
    <property type="match status" value="1"/>
</dbReference>
<dbReference type="PANTHER" id="PTHR33505">
    <property type="entry name" value="ZGC:162634"/>
    <property type="match status" value="1"/>
</dbReference>
<dbReference type="Pfam" id="PF03966">
    <property type="entry name" value="Trm112p"/>
    <property type="match status" value="1"/>
</dbReference>
<dbReference type="SUPFAM" id="SSF158997">
    <property type="entry name" value="Trm112p-like"/>
    <property type="match status" value="1"/>
</dbReference>
<proteinExistence type="inferred from homology"/>
<sequence length="64" mass="7032">MDARLLEIIVCPICKGPLHYDRAAQELICNADKLAYPIRDGIPVMLVDEARQTVEGTPVDPAGR</sequence>
<comment type="similarity">
    <text evidence="1">Belongs to the UPF0434 family.</text>
</comment>
<reference key="1">
    <citation type="journal article" date="2009" name="J. Bacteriol.">
        <title>The genome of Burkholderia cenocepacia J2315, an epidemic pathogen of cystic fibrosis patients.</title>
        <authorList>
            <person name="Holden M.T."/>
            <person name="Seth-Smith H.M."/>
            <person name="Crossman L.C."/>
            <person name="Sebaihia M."/>
            <person name="Bentley S.D."/>
            <person name="Cerdeno-Tarraga A.M."/>
            <person name="Thomson N.R."/>
            <person name="Bason N."/>
            <person name="Quail M.A."/>
            <person name="Sharp S."/>
            <person name="Cherevach I."/>
            <person name="Churcher C."/>
            <person name="Goodhead I."/>
            <person name="Hauser H."/>
            <person name="Holroyd N."/>
            <person name="Mungall K."/>
            <person name="Scott P."/>
            <person name="Walker D."/>
            <person name="White B."/>
            <person name="Rose H."/>
            <person name="Iversen P."/>
            <person name="Mil-Homens D."/>
            <person name="Rocha E.P."/>
            <person name="Fialho A.M."/>
            <person name="Baldwin A."/>
            <person name="Dowson C."/>
            <person name="Barrell B.G."/>
            <person name="Govan J.R."/>
            <person name="Vandamme P."/>
            <person name="Hart C.A."/>
            <person name="Mahenthiralingam E."/>
            <person name="Parkhill J."/>
        </authorList>
    </citation>
    <scope>NUCLEOTIDE SEQUENCE [LARGE SCALE GENOMIC DNA]</scope>
    <source>
        <strain>ATCC BAA-245 / DSM 16553 / LMG 16656 / NCTC 13227 / J2315 / CF5610</strain>
    </source>
</reference>